<reference key="1">
    <citation type="journal article" date="2009" name="Genome Res.">
        <title>Newly introduced genomic prophage islands are critical determinants of in vivo competitiveness in the Liverpool epidemic strain of Pseudomonas aeruginosa.</title>
        <authorList>
            <person name="Winstanley C."/>
            <person name="Langille M.G.I."/>
            <person name="Fothergill J.L."/>
            <person name="Kukavica-Ibrulj I."/>
            <person name="Paradis-Bleau C."/>
            <person name="Sanschagrin F."/>
            <person name="Thomson N.R."/>
            <person name="Winsor G.L."/>
            <person name="Quail M.A."/>
            <person name="Lennard N."/>
            <person name="Bignell A."/>
            <person name="Clarke L."/>
            <person name="Seeger K."/>
            <person name="Saunders D."/>
            <person name="Harris D."/>
            <person name="Parkhill J."/>
            <person name="Hancock R.E.W."/>
            <person name="Brinkman F.S.L."/>
            <person name="Levesque R.C."/>
        </authorList>
    </citation>
    <scope>NUCLEOTIDE SEQUENCE [LARGE SCALE GENOMIC DNA]</scope>
    <source>
        <strain>LESB58</strain>
    </source>
</reference>
<dbReference type="EC" id="3.5.1.4" evidence="1"/>
<dbReference type="EMBL" id="FM209186">
    <property type="protein sequence ID" value="CAW26426.1"/>
    <property type="molecule type" value="Genomic_DNA"/>
</dbReference>
<dbReference type="RefSeq" id="WP_003091756.1">
    <property type="nucleotide sequence ID" value="NC_011770.1"/>
</dbReference>
<dbReference type="SMR" id="B7V2X1"/>
<dbReference type="KEGG" id="pag:PLES_16981"/>
<dbReference type="HOGENOM" id="CLU_071797_0_0_6"/>
<dbReference type="GO" id="GO:0004040">
    <property type="term" value="F:amidase activity"/>
    <property type="evidence" value="ECO:0007669"/>
    <property type="project" value="UniProtKB-UniRule"/>
</dbReference>
<dbReference type="CDD" id="cd07565">
    <property type="entry name" value="aliphatic_amidase"/>
    <property type="match status" value="1"/>
</dbReference>
<dbReference type="FunFam" id="3.60.110.10:FF:000014">
    <property type="entry name" value="Aliphatic amidase"/>
    <property type="match status" value="1"/>
</dbReference>
<dbReference type="Gene3D" id="3.60.110.10">
    <property type="entry name" value="Carbon-nitrogen hydrolase"/>
    <property type="match status" value="1"/>
</dbReference>
<dbReference type="HAMAP" id="MF_01242">
    <property type="entry name" value="Aliphatic_amidase"/>
    <property type="match status" value="1"/>
</dbReference>
<dbReference type="InterPro" id="IPR050345">
    <property type="entry name" value="Aliph_Amidase/BUP"/>
</dbReference>
<dbReference type="InterPro" id="IPR023719">
    <property type="entry name" value="Aliphatic_amidase"/>
</dbReference>
<dbReference type="InterPro" id="IPR003010">
    <property type="entry name" value="C-N_Hydrolase"/>
</dbReference>
<dbReference type="InterPro" id="IPR036526">
    <property type="entry name" value="C-N_Hydrolase_sf"/>
</dbReference>
<dbReference type="NCBIfam" id="NF009802">
    <property type="entry name" value="PRK13286.1"/>
    <property type="match status" value="1"/>
</dbReference>
<dbReference type="PANTHER" id="PTHR43674:SF14">
    <property type="entry name" value="ALIPHATIC AMIDASE"/>
    <property type="match status" value="1"/>
</dbReference>
<dbReference type="PANTHER" id="PTHR43674">
    <property type="entry name" value="NITRILASE C965.09-RELATED"/>
    <property type="match status" value="1"/>
</dbReference>
<dbReference type="Pfam" id="PF00795">
    <property type="entry name" value="CN_hydrolase"/>
    <property type="match status" value="1"/>
</dbReference>
<dbReference type="SUPFAM" id="SSF56317">
    <property type="entry name" value="Carbon-nitrogen hydrolase"/>
    <property type="match status" value="1"/>
</dbReference>
<dbReference type="PROSITE" id="PS50263">
    <property type="entry name" value="CN_HYDROLASE"/>
    <property type="match status" value="1"/>
</dbReference>
<keyword id="KW-0378">Hydrolase</keyword>
<protein>
    <recommendedName>
        <fullName evidence="1">Aliphatic amidase</fullName>
        <ecNumber evidence="1">3.5.1.4</ecNumber>
    </recommendedName>
    <alternativeName>
        <fullName evidence="1">Acylamide amidohydrolase</fullName>
    </alternativeName>
</protein>
<name>AMIE_PSEA8</name>
<comment type="function">
    <text evidence="1">Catalyzes the hydrolysis of short-chain aliphatic amides to their corresponding organic acids with release of ammonia.</text>
</comment>
<comment type="function">
    <text evidence="1">Also exhibits in vitro acyl transferase activity, transferring the acyl moiety of short-chain amides to hydroxylamine to form hydroxamates.</text>
</comment>
<comment type="catalytic activity">
    <reaction evidence="1">
        <text>a monocarboxylic acid amide + H2O = a monocarboxylate + NH4(+)</text>
        <dbReference type="Rhea" id="RHEA:12020"/>
        <dbReference type="ChEBI" id="CHEBI:15377"/>
        <dbReference type="ChEBI" id="CHEBI:28938"/>
        <dbReference type="ChEBI" id="CHEBI:35757"/>
        <dbReference type="ChEBI" id="CHEBI:83628"/>
        <dbReference type="EC" id="3.5.1.4"/>
    </reaction>
</comment>
<comment type="similarity">
    <text evidence="1">Belongs to the carbon-nitrogen hydrolase superfamily. Aliphatic amidase family.</text>
</comment>
<proteinExistence type="inferred from homology"/>
<evidence type="ECO:0000255" key="1">
    <source>
        <dbReference type="HAMAP-Rule" id="MF_01242"/>
    </source>
</evidence>
<evidence type="ECO:0000255" key="2">
    <source>
        <dbReference type="PROSITE-ProRule" id="PRU00054"/>
    </source>
</evidence>
<sequence>MRHGDISSSNDTVGVAVVNYKMPRLHTAAEVLDNARKIADMIVGMKQGLPGMDLVVFPEYSLQGIMYDPAEMMETAVAIPGEETEIFSRACRKANVWGVFSLTGERHEEHPRKAPYNTLVLIDNNGEIVQKYRKIIPWCPIEGWYPGGQTYVSEGPKGMKISLIICDDGNYPEIWRDCAMKGAELIVRCQGYMYPAKDQQVMMAKAMAWANNCYVAVANAAGFDGVYSYFGHSAIIGFDGRTLGECGEEEMGIQYAQLSLSQIRDARANDQSQNHLFKILHRGYSGLQASGDGDRGLAECPFEFYRTWVTDAEKARENVERLTRSTTGVAQCPVGRLPYEGLEKEA</sequence>
<organism>
    <name type="scientific">Pseudomonas aeruginosa (strain LESB58)</name>
    <dbReference type="NCBI Taxonomy" id="557722"/>
    <lineage>
        <taxon>Bacteria</taxon>
        <taxon>Pseudomonadati</taxon>
        <taxon>Pseudomonadota</taxon>
        <taxon>Gammaproteobacteria</taxon>
        <taxon>Pseudomonadales</taxon>
        <taxon>Pseudomonadaceae</taxon>
        <taxon>Pseudomonas</taxon>
    </lineage>
</organism>
<accession>B7V2X1</accession>
<gene>
    <name evidence="1" type="primary">amiE</name>
    <name type="ordered locus">PLES_16981</name>
</gene>
<feature type="chain" id="PRO_1000139809" description="Aliphatic amidase">
    <location>
        <begin position="1"/>
        <end position="346"/>
    </location>
</feature>
<feature type="domain" description="CN hydrolase" evidence="2">
    <location>
        <begin position="13"/>
        <end position="260"/>
    </location>
</feature>
<feature type="active site" description="Proton acceptor" evidence="1">
    <location>
        <position position="59"/>
    </location>
</feature>
<feature type="active site" description="Proton donor" evidence="1">
    <location>
        <position position="134"/>
    </location>
</feature>
<feature type="active site" description="Nucleophile" evidence="1">
    <location>
        <position position="166"/>
    </location>
</feature>